<accession>Q1XDS6</accession>
<dbReference type="EC" id="3.1.26.-"/>
<dbReference type="EMBL" id="AP006715">
    <property type="protein sequence ID" value="BAE92335.1"/>
    <property type="molecule type" value="Genomic_DNA"/>
</dbReference>
<dbReference type="RefSeq" id="YP_536892.1">
    <property type="nucleotide sequence ID" value="NC_007932.1"/>
</dbReference>
<dbReference type="SMR" id="Q1XDS6"/>
<dbReference type="GeneID" id="3978795"/>
<dbReference type="GO" id="GO:0009570">
    <property type="term" value="C:chloroplast stroma"/>
    <property type="evidence" value="ECO:0007669"/>
    <property type="project" value="UniProtKB-SubCell"/>
</dbReference>
<dbReference type="GO" id="GO:0004519">
    <property type="term" value="F:endonuclease activity"/>
    <property type="evidence" value="ECO:0007669"/>
    <property type="project" value="UniProtKB-KW"/>
</dbReference>
<dbReference type="GO" id="GO:0046872">
    <property type="term" value="F:metal ion binding"/>
    <property type="evidence" value="ECO:0007669"/>
    <property type="project" value="UniProtKB-KW"/>
</dbReference>
<dbReference type="GO" id="GO:0003723">
    <property type="term" value="F:RNA binding"/>
    <property type="evidence" value="ECO:0007669"/>
    <property type="project" value="UniProtKB-KW"/>
</dbReference>
<dbReference type="GO" id="GO:0004540">
    <property type="term" value="F:RNA nuclease activity"/>
    <property type="evidence" value="ECO:0007669"/>
    <property type="project" value="InterPro"/>
</dbReference>
<dbReference type="GO" id="GO:0006397">
    <property type="term" value="P:mRNA processing"/>
    <property type="evidence" value="ECO:0007669"/>
    <property type="project" value="UniProtKB-KW"/>
</dbReference>
<dbReference type="GO" id="GO:0006364">
    <property type="term" value="P:rRNA processing"/>
    <property type="evidence" value="ECO:0007669"/>
    <property type="project" value="TreeGrafter"/>
</dbReference>
<dbReference type="CDD" id="cd04453">
    <property type="entry name" value="S1_RNase_E"/>
    <property type="match status" value="1"/>
</dbReference>
<dbReference type="Gene3D" id="2.40.50.140">
    <property type="entry name" value="Nucleic acid-binding proteins"/>
    <property type="match status" value="1"/>
</dbReference>
<dbReference type="InterPro" id="IPR012340">
    <property type="entry name" value="NA-bd_OB-fold"/>
</dbReference>
<dbReference type="InterPro" id="IPR019307">
    <property type="entry name" value="RNA-bd_AU-1/RNase_E/G"/>
</dbReference>
<dbReference type="InterPro" id="IPR004659">
    <property type="entry name" value="RNase_E/G"/>
</dbReference>
<dbReference type="InterPro" id="IPR003029">
    <property type="entry name" value="S1_domain"/>
</dbReference>
<dbReference type="NCBIfam" id="TIGR00757">
    <property type="entry name" value="RNaseEG"/>
    <property type="match status" value="1"/>
</dbReference>
<dbReference type="PANTHER" id="PTHR30001">
    <property type="entry name" value="RIBONUCLEASE"/>
    <property type="match status" value="1"/>
</dbReference>
<dbReference type="PANTHER" id="PTHR30001:SF0">
    <property type="entry name" value="RIBONUCLEASE G"/>
    <property type="match status" value="1"/>
</dbReference>
<dbReference type="Pfam" id="PF10150">
    <property type="entry name" value="RNase_E_G"/>
    <property type="match status" value="1"/>
</dbReference>
<dbReference type="SMART" id="SM00316">
    <property type="entry name" value="S1"/>
    <property type="match status" value="1"/>
</dbReference>
<dbReference type="SUPFAM" id="SSF50249">
    <property type="entry name" value="Nucleic acid-binding proteins"/>
    <property type="match status" value="1"/>
</dbReference>
<dbReference type="PROSITE" id="PS50126">
    <property type="entry name" value="S1"/>
    <property type="match status" value="1"/>
</dbReference>
<protein>
    <recommendedName>
        <fullName>Ribonuclease E/G-like protein</fullName>
        <shortName>RNase E/G-like protein</shortName>
        <ecNumber>3.1.26.-</ecNumber>
    </recommendedName>
</protein>
<gene>
    <name type="primary">rne</name>
</gene>
<keyword id="KW-0150">Chloroplast</keyword>
<keyword id="KW-0255">Endonuclease</keyword>
<keyword id="KW-0378">Hydrolase</keyword>
<keyword id="KW-0460">Magnesium</keyword>
<keyword id="KW-0479">Metal-binding</keyword>
<keyword id="KW-0507">mRNA processing</keyword>
<keyword id="KW-0540">Nuclease</keyword>
<keyword id="KW-0934">Plastid</keyword>
<keyword id="KW-0694">RNA-binding</keyword>
<reference key="1">
    <citation type="submission" date="2003-11" db="EMBL/GenBank/DDBJ databases">
        <title>Whole genome sequence of Porphyra yezoensis chloroplast.</title>
        <authorList>
            <person name="Kunimoto M."/>
            <person name="Morishima K."/>
            <person name="Yoshikawa M."/>
            <person name="Fukuda S."/>
            <person name="Kobayashi T."/>
            <person name="Kobayashi M."/>
            <person name="Okazaki T."/>
            <person name="Ohara I."/>
            <person name="Nakayama I."/>
        </authorList>
    </citation>
    <scope>NUCLEOTIDE SEQUENCE [LARGE SCALE GENOMIC DNA]</scope>
    <source>
        <strain>U-51</strain>
    </source>
</reference>
<proteinExistence type="inferred from homology"/>
<feature type="chain" id="PRO_0000277283" description="Ribonuclease E/G-like protein">
    <location>
        <begin position="1"/>
        <end position="509"/>
    </location>
</feature>
<feature type="domain" description="S1 motif" evidence="3">
    <location>
        <begin position="35"/>
        <end position="117"/>
    </location>
</feature>
<feature type="binding site" evidence="2">
    <location>
        <position position="296"/>
    </location>
    <ligand>
        <name>Mg(2+)</name>
        <dbReference type="ChEBI" id="CHEBI:18420"/>
        <note>catalytic</note>
    </ligand>
</feature>
<feature type="binding site" evidence="2">
    <location>
        <position position="339"/>
    </location>
    <ligand>
        <name>Mg(2+)</name>
        <dbReference type="ChEBI" id="CHEBI:18420"/>
        <note>catalytic</note>
    </ligand>
</feature>
<sequence>MTNTIVISCLHNMAAILYCGQIQKLVVANAHYQVSDIYLGCVDKIFSGINAAFINLGKNEYSGFIHISDTGPLKKKYYVNNITNILTIRQKILVQIIKEPTLNKGPRLTANITLSGRYIVLMPFSQSICISRKIYDEDERHYLKSLAILIKPATMGLLFRPSAVGVDEEIILSELKNLKEQWNFVQKSAINSYSPVLLYKDEDIVKKVIRDFYNNNTNNIVIDSNLGLKQLNYYIHTWHCNNSSTVPKIKLYSNNQCILDAFGINQAISRALIPKVDLILGGYMFIETLEAFTIIDVNSGSFNNSTSARETVLKTNCSAATEIAYQLQIRNITGVIIIDFIDMESQRDQLQLLEHFNKELSLDDAKPQIVQLSELGLVELTRRRQGKSLYELISSDSNYFYFFTQSERSQSLKRFDDRQQKQQIFNKSWLSAEINTINKVFFQKSNLCRPANFYLIRNLYIVKSSITYKQNYLLTHRSKLIYSKEYSKVLPSSYYLASLNKNSNQEFLS</sequence>
<geneLocation type="chloroplast"/>
<comment type="function">
    <text evidence="1">Involved in intercistronic processing of primary transcripts from chloroplast operons. The endonucleolytic activity of the enzyme depends on the number of phosphates at the 5' end, is inhibited by structured RNA, and preferentially cleaves A/U-rich sequences.</text>
</comment>
<comment type="cofactor">
    <cofactor evidence="2">
        <name>Mg(2+)</name>
        <dbReference type="ChEBI" id="CHEBI:18420"/>
    </cofactor>
    <text evidence="2">Binds 1 Mg(2+) ion per subunit.</text>
</comment>
<comment type="subcellular location">
    <subcellularLocation>
        <location evidence="1">Plastid</location>
        <location evidence="1">Chloroplast stroma</location>
    </subcellularLocation>
</comment>
<comment type="similarity">
    <text evidence="4">Belongs to the RNase E/G family.</text>
</comment>
<evidence type="ECO:0000250" key="1">
    <source>
        <dbReference type="UniProtKB" id="F4IV66"/>
    </source>
</evidence>
<evidence type="ECO:0000250" key="2">
    <source>
        <dbReference type="UniProtKB" id="P21513"/>
    </source>
</evidence>
<evidence type="ECO:0000255" key="3">
    <source>
        <dbReference type="PROSITE-ProRule" id="PRU00180"/>
    </source>
</evidence>
<evidence type="ECO:0000305" key="4"/>
<organism>
    <name type="scientific">Pyropia yezoensis</name>
    <name type="common">Susabi-nori</name>
    <name type="synonym">Porphyra yezoensis</name>
    <dbReference type="NCBI Taxonomy" id="2788"/>
    <lineage>
        <taxon>Eukaryota</taxon>
        <taxon>Rhodophyta</taxon>
        <taxon>Bangiophyceae</taxon>
        <taxon>Bangiales</taxon>
        <taxon>Bangiaceae</taxon>
        <taxon>Pyropia</taxon>
    </lineage>
</organism>
<name>RNE_PYRYE</name>